<gene>
    <name evidence="1" type="primary">hisF</name>
    <name type="ordered locus">DMR_21040</name>
</gene>
<comment type="function">
    <text evidence="1">IGPS catalyzes the conversion of PRFAR and glutamine to IGP, AICAR and glutamate. The HisF subunit catalyzes the cyclization activity that produces IGP and AICAR from PRFAR using the ammonia provided by the HisH subunit.</text>
</comment>
<comment type="catalytic activity">
    <reaction evidence="1">
        <text>5-[(5-phospho-1-deoxy-D-ribulos-1-ylimino)methylamino]-1-(5-phospho-beta-D-ribosyl)imidazole-4-carboxamide + L-glutamine = D-erythro-1-(imidazol-4-yl)glycerol 3-phosphate + 5-amino-1-(5-phospho-beta-D-ribosyl)imidazole-4-carboxamide + L-glutamate + H(+)</text>
        <dbReference type="Rhea" id="RHEA:24793"/>
        <dbReference type="ChEBI" id="CHEBI:15378"/>
        <dbReference type="ChEBI" id="CHEBI:29985"/>
        <dbReference type="ChEBI" id="CHEBI:58278"/>
        <dbReference type="ChEBI" id="CHEBI:58359"/>
        <dbReference type="ChEBI" id="CHEBI:58475"/>
        <dbReference type="ChEBI" id="CHEBI:58525"/>
        <dbReference type="EC" id="4.3.2.10"/>
    </reaction>
</comment>
<comment type="pathway">
    <text evidence="1">Amino-acid biosynthesis; L-histidine biosynthesis; L-histidine from 5-phospho-alpha-D-ribose 1-diphosphate: step 5/9.</text>
</comment>
<comment type="subunit">
    <text evidence="1">Heterodimer of HisH and HisF.</text>
</comment>
<comment type="subcellular location">
    <subcellularLocation>
        <location evidence="1">Cytoplasm</location>
    </subcellularLocation>
</comment>
<comment type="similarity">
    <text evidence="1">Belongs to the HisA/HisF family.</text>
</comment>
<feature type="chain" id="PRO_1000213207" description="Imidazole glycerol phosphate synthase subunit HisF">
    <location>
        <begin position="1"/>
        <end position="259"/>
    </location>
</feature>
<feature type="active site" evidence="1">
    <location>
        <position position="11"/>
    </location>
</feature>
<feature type="active site" evidence="1">
    <location>
        <position position="130"/>
    </location>
</feature>
<protein>
    <recommendedName>
        <fullName evidence="1">Imidazole glycerol phosphate synthase subunit HisF</fullName>
        <ecNumber evidence="1">4.3.2.10</ecNumber>
    </recommendedName>
    <alternativeName>
        <fullName evidence="1">IGP synthase cyclase subunit</fullName>
    </alternativeName>
    <alternativeName>
        <fullName evidence="1">IGP synthase subunit HisF</fullName>
    </alternativeName>
    <alternativeName>
        <fullName evidence="1">ImGP synthase subunit HisF</fullName>
        <shortName evidence="1">IGPS subunit HisF</shortName>
    </alternativeName>
</protein>
<sequence>MLSKRVIPCLDVRDGKLTKGIKFQGNVDIGDPVETARLYYEAGADELVFYDITASSEGRGIMLDVVDRVAREIFIPFSVGGGISTVEDMRAVLLAGAEKISVNSAAVKNPDIISLGAAAFGSQCVVVGMDVKHVGVSEQIPSGYEIVIHGGRKAMGLDALEWARTVEALGAGEICCNSIDADGAKTGYELTLTRMIAEAVTIPVIASGGAGNPDHMADAVTTGKASAALIASIVHYGEYSIKDCKDHMAKRGVKVRNIW</sequence>
<proteinExistence type="inferred from homology"/>
<name>HIS6_SOLM1</name>
<reference key="1">
    <citation type="journal article" date="2009" name="Genome Res.">
        <title>Whole genome sequence of Desulfovibrio magneticus strain RS-1 revealed common gene clusters in magnetotactic bacteria.</title>
        <authorList>
            <person name="Nakazawa H."/>
            <person name="Arakaki A."/>
            <person name="Narita-Yamada S."/>
            <person name="Yashiro I."/>
            <person name="Jinno K."/>
            <person name="Aoki N."/>
            <person name="Tsuruyama A."/>
            <person name="Okamura Y."/>
            <person name="Tanikawa S."/>
            <person name="Fujita N."/>
            <person name="Takeyama H."/>
            <person name="Matsunaga T."/>
        </authorList>
    </citation>
    <scope>NUCLEOTIDE SEQUENCE [LARGE SCALE GENOMIC DNA]</scope>
    <source>
        <strain>ATCC 700980 / DSM 13731 / RS-1</strain>
    </source>
</reference>
<evidence type="ECO:0000255" key="1">
    <source>
        <dbReference type="HAMAP-Rule" id="MF_01013"/>
    </source>
</evidence>
<keyword id="KW-0028">Amino-acid biosynthesis</keyword>
<keyword id="KW-0963">Cytoplasm</keyword>
<keyword id="KW-0368">Histidine biosynthesis</keyword>
<keyword id="KW-0456">Lyase</keyword>
<dbReference type="EC" id="4.3.2.10" evidence="1"/>
<dbReference type="EMBL" id="AP010904">
    <property type="protein sequence ID" value="BAH75595.1"/>
    <property type="molecule type" value="Genomic_DNA"/>
</dbReference>
<dbReference type="RefSeq" id="WP_015860781.1">
    <property type="nucleotide sequence ID" value="NC_012796.1"/>
</dbReference>
<dbReference type="SMR" id="C4XS73"/>
<dbReference type="STRING" id="573370.DMR_21040"/>
<dbReference type="KEGG" id="dma:DMR_21040"/>
<dbReference type="eggNOG" id="COG0107">
    <property type="taxonomic scope" value="Bacteria"/>
</dbReference>
<dbReference type="HOGENOM" id="CLU_048577_4_0_7"/>
<dbReference type="OrthoDB" id="9807749at2"/>
<dbReference type="UniPathway" id="UPA00031">
    <property type="reaction ID" value="UER00010"/>
</dbReference>
<dbReference type="Proteomes" id="UP000009071">
    <property type="component" value="Chromosome"/>
</dbReference>
<dbReference type="GO" id="GO:0005737">
    <property type="term" value="C:cytoplasm"/>
    <property type="evidence" value="ECO:0007669"/>
    <property type="project" value="UniProtKB-SubCell"/>
</dbReference>
<dbReference type="GO" id="GO:0000107">
    <property type="term" value="F:imidazoleglycerol-phosphate synthase activity"/>
    <property type="evidence" value="ECO:0007669"/>
    <property type="project" value="UniProtKB-UniRule"/>
</dbReference>
<dbReference type="GO" id="GO:0016829">
    <property type="term" value="F:lyase activity"/>
    <property type="evidence" value="ECO:0007669"/>
    <property type="project" value="UniProtKB-KW"/>
</dbReference>
<dbReference type="GO" id="GO:0000105">
    <property type="term" value="P:L-histidine biosynthetic process"/>
    <property type="evidence" value="ECO:0007669"/>
    <property type="project" value="UniProtKB-UniRule"/>
</dbReference>
<dbReference type="CDD" id="cd04731">
    <property type="entry name" value="HisF"/>
    <property type="match status" value="1"/>
</dbReference>
<dbReference type="Gene3D" id="3.20.20.70">
    <property type="entry name" value="Aldolase class I"/>
    <property type="match status" value="1"/>
</dbReference>
<dbReference type="HAMAP" id="MF_01013">
    <property type="entry name" value="HisF"/>
    <property type="match status" value="1"/>
</dbReference>
<dbReference type="InterPro" id="IPR013785">
    <property type="entry name" value="Aldolase_TIM"/>
</dbReference>
<dbReference type="InterPro" id="IPR006062">
    <property type="entry name" value="His_biosynth"/>
</dbReference>
<dbReference type="InterPro" id="IPR004651">
    <property type="entry name" value="HisF"/>
</dbReference>
<dbReference type="InterPro" id="IPR050064">
    <property type="entry name" value="IGPS_HisA/HisF"/>
</dbReference>
<dbReference type="InterPro" id="IPR011060">
    <property type="entry name" value="RibuloseP-bd_barrel"/>
</dbReference>
<dbReference type="NCBIfam" id="TIGR00735">
    <property type="entry name" value="hisF"/>
    <property type="match status" value="1"/>
</dbReference>
<dbReference type="PANTHER" id="PTHR21235:SF2">
    <property type="entry name" value="IMIDAZOLE GLYCEROL PHOSPHATE SYNTHASE HISHF"/>
    <property type="match status" value="1"/>
</dbReference>
<dbReference type="PANTHER" id="PTHR21235">
    <property type="entry name" value="IMIDAZOLE GLYCEROL PHOSPHATE SYNTHASE SUBUNIT HISF/H IGP SYNTHASE SUBUNIT HISF/H"/>
    <property type="match status" value="1"/>
</dbReference>
<dbReference type="Pfam" id="PF00977">
    <property type="entry name" value="His_biosynth"/>
    <property type="match status" value="1"/>
</dbReference>
<dbReference type="SUPFAM" id="SSF51366">
    <property type="entry name" value="Ribulose-phoshate binding barrel"/>
    <property type="match status" value="1"/>
</dbReference>
<organism>
    <name type="scientific">Solidesulfovibrio magneticus (strain ATCC 700980 / DSM 13731 / RS-1)</name>
    <name type="common">Desulfovibrio magneticus</name>
    <dbReference type="NCBI Taxonomy" id="573370"/>
    <lineage>
        <taxon>Bacteria</taxon>
        <taxon>Pseudomonadati</taxon>
        <taxon>Thermodesulfobacteriota</taxon>
        <taxon>Desulfovibrionia</taxon>
        <taxon>Desulfovibrionales</taxon>
        <taxon>Desulfovibrionaceae</taxon>
        <taxon>Solidesulfovibrio</taxon>
    </lineage>
</organism>
<accession>C4XS73</accession>